<reference key="1">
    <citation type="journal article" date="1998" name="DNA Res.">
        <title>Structural analysis of Arabidopsis thaliana chromosome 5. IV. Sequence features of the regions of 1,456,315 bp covered by nineteen physically assigned P1 and TAC clones.</title>
        <authorList>
            <person name="Sato S."/>
            <person name="Kaneko T."/>
            <person name="Kotani H."/>
            <person name="Nakamura Y."/>
            <person name="Asamizu E."/>
            <person name="Miyajima N."/>
            <person name="Tabata S."/>
        </authorList>
    </citation>
    <scope>NUCLEOTIDE SEQUENCE [LARGE SCALE GENOMIC DNA]</scope>
    <source>
        <strain>cv. Columbia</strain>
    </source>
</reference>
<reference key="2">
    <citation type="journal article" date="2017" name="Plant J.">
        <title>Araport11: a complete reannotation of the Arabidopsis thaliana reference genome.</title>
        <authorList>
            <person name="Cheng C.Y."/>
            <person name="Krishnakumar V."/>
            <person name="Chan A.P."/>
            <person name="Thibaud-Nissen F."/>
            <person name="Schobel S."/>
            <person name="Town C.D."/>
        </authorList>
    </citation>
    <scope>GENOME REANNOTATION</scope>
    <source>
        <strain>cv. Columbia</strain>
    </source>
</reference>
<reference key="3">
    <citation type="journal article" date="2003" name="Science">
        <title>Empirical analysis of transcriptional activity in the Arabidopsis genome.</title>
        <authorList>
            <person name="Yamada K."/>
            <person name="Lim J."/>
            <person name="Dale J.M."/>
            <person name="Chen H."/>
            <person name="Shinn P."/>
            <person name="Palm C.J."/>
            <person name="Southwick A.M."/>
            <person name="Wu H.C."/>
            <person name="Kim C.J."/>
            <person name="Nguyen M."/>
            <person name="Pham P.K."/>
            <person name="Cheuk R.F."/>
            <person name="Karlin-Newmann G."/>
            <person name="Liu S.X."/>
            <person name="Lam B."/>
            <person name="Sakano H."/>
            <person name="Wu T."/>
            <person name="Yu G."/>
            <person name="Miranda M."/>
            <person name="Quach H.L."/>
            <person name="Tripp M."/>
            <person name="Chang C.H."/>
            <person name="Lee J.M."/>
            <person name="Toriumi M.J."/>
            <person name="Chan M.M."/>
            <person name="Tang C.C."/>
            <person name="Onodera C.S."/>
            <person name="Deng J.M."/>
            <person name="Akiyama K."/>
            <person name="Ansari Y."/>
            <person name="Arakawa T."/>
            <person name="Banh J."/>
            <person name="Banno F."/>
            <person name="Bowser L."/>
            <person name="Brooks S.Y."/>
            <person name="Carninci P."/>
            <person name="Chao Q."/>
            <person name="Choy N."/>
            <person name="Enju A."/>
            <person name="Goldsmith A.D."/>
            <person name="Gurjal M."/>
            <person name="Hansen N.F."/>
            <person name="Hayashizaki Y."/>
            <person name="Johnson-Hopson C."/>
            <person name="Hsuan V.W."/>
            <person name="Iida K."/>
            <person name="Karnes M."/>
            <person name="Khan S."/>
            <person name="Koesema E."/>
            <person name="Ishida J."/>
            <person name="Jiang P.X."/>
            <person name="Jones T."/>
            <person name="Kawai J."/>
            <person name="Kamiya A."/>
            <person name="Meyers C."/>
            <person name="Nakajima M."/>
            <person name="Narusaka M."/>
            <person name="Seki M."/>
            <person name="Sakurai T."/>
            <person name="Satou M."/>
            <person name="Tamse R."/>
            <person name="Vaysberg M."/>
            <person name="Wallender E.K."/>
            <person name="Wong C."/>
            <person name="Yamamura Y."/>
            <person name="Yuan S."/>
            <person name="Shinozaki K."/>
            <person name="Davis R.W."/>
            <person name="Theologis A."/>
            <person name="Ecker J.R."/>
        </authorList>
    </citation>
    <scope>NUCLEOTIDE SEQUENCE [LARGE SCALE MRNA]</scope>
    <source>
        <strain>cv. Columbia</strain>
    </source>
</reference>
<sequence length="238" mass="26923">MDVPLPVEKLSYGSNTEDKTCVVLVATGSFNPPTFMHLRMFELARDELRSKGFHVLGGYMSPVNDAYKKKGLLSAEHRLEMCNVSCQSSDFVMVDPWEASQSNYQRTLTVLSRVKTFLTTNRHVPEESLKVMLLCGSDLLLSFCTPGVWIPEQLRTICKDYGIVCIRREGQDVENMISGDEILNENCANVKIVDNTVPNQISSSRLRQCISRGLSVKYLTEDGVIDYIRQHQLYTELT</sequence>
<evidence type="ECO:0000250" key="1">
    <source>
        <dbReference type="UniProtKB" id="Q96T66"/>
    </source>
</evidence>
<evidence type="ECO:0000250" key="2">
    <source>
        <dbReference type="UniProtKB" id="Q9HAN9"/>
    </source>
</evidence>
<evidence type="ECO:0000305" key="3"/>
<name>NMNAT_ARATH</name>
<keyword id="KW-0025">Alternative splicing</keyword>
<keyword id="KW-0067">ATP-binding</keyword>
<keyword id="KW-0479">Metal-binding</keyword>
<keyword id="KW-0520">NAD</keyword>
<keyword id="KW-0547">Nucleotide-binding</keyword>
<keyword id="KW-0548">Nucleotidyltransferase</keyword>
<keyword id="KW-0539">Nucleus</keyword>
<keyword id="KW-0662">Pyridine nucleotide biosynthesis</keyword>
<keyword id="KW-1185">Reference proteome</keyword>
<keyword id="KW-0808">Transferase</keyword>
<gene>
    <name type="primary">NMNAT</name>
    <name type="ordered locus">At5g55810</name>
    <name type="ORF">MDF20.25</name>
</gene>
<feature type="chain" id="PRO_0000423482" description="Nicotinamide/nicotinic acid mononucleotide adenylyltransferase">
    <location>
        <begin position="1"/>
        <end position="238"/>
    </location>
</feature>
<feature type="binding site" evidence="1">
    <location>
        <position position="29"/>
    </location>
    <ligand>
        <name>NAD(+)</name>
        <dbReference type="ChEBI" id="CHEBI:57540"/>
    </ligand>
</feature>
<feature type="binding site" evidence="1">
    <location>
        <position position="30"/>
    </location>
    <ligand>
        <name>NAD(+)</name>
        <dbReference type="ChEBI" id="CHEBI:57540"/>
    </ligand>
</feature>
<feature type="binding site" description="in other chain" evidence="1">
    <location>
        <position position="37"/>
    </location>
    <ligand>
        <name>ATP</name>
        <dbReference type="ChEBI" id="CHEBI:30616"/>
        <note>ligand shared between dimeric partners</note>
    </ligand>
</feature>
<feature type="binding site" description="in other chain" evidence="1">
    <location>
        <position position="70"/>
    </location>
    <ligand>
        <name>ATP</name>
        <dbReference type="ChEBI" id="CHEBI:30616"/>
        <note>ligand shared between dimeric partners</note>
    </ligand>
</feature>
<feature type="binding site" evidence="1">
    <location>
        <position position="107"/>
    </location>
    <ligand>
        <name>NAD(+)</name>
        <dbReference type="ChEBI" id="CHEBI:57540"/>
    </ligand>
</feature>
<feature type="binding site" evidence="1">
    <location>
        <position position="136"/>
    </location>
    <ligand>
        <name>NAD(+)</name>
        <dbReference type="ChEBI" id="CHEBI:57540"/>
    </ligand>
</feature>
<feature type="binding site" evidence="1">
    <location>
        <position position="138"/>
    </location>
    <ligand>
        <name>NAD(+)</name>
        <dbReference type="ChEBI" id="CHEBI:57540"/>
    </ligand>
</feature>
<feature type="binding site" evidence="1">
    <location>
        <position position="149"/>
    </location>
    <ligand>
        <name>NAD(+)</name>
        <dbReference type="ChEBI" id="CHEBI:57540"/>
    </ligand>
</feature>
<feature type="binding site" evidence="1">
    <location>
        <position position="168"/>
    </location>
    <ligand>
        <name>NAD(+)</name>
        <dbReference type="ChEBI" id="CHEBI:57540"/>
    </ligand>
</feature>
<feature type="binding site" evidence="1">
    <location>
        <position position="199"/>
    </location>
    <ligand>
        <name>NAD(+)</name>
        <dbReference type="ChEBI" id="CHEBI:57540"/>
    </ligand>
</feature>
<feature type="binding site" description="in other chain" evidence="1">
    <location>
        <begin position="204"/>
        <end position="205"/>
    </location>
    <ligand>
        <name>ATP</name>
        <dbReference type="ChEBI" id="CHEBI:30616"/>
        <note>ligand shared between dimeric partners</note>
    </ligand>
</feature>
<dbReference type="EC" id="2.7.7.1"/>
<dbReference type="EC" id="2.7.7.18"/>
<dbReference type="EMBL" id="AB009050">
    <property type="protein sequence ID" value="BAB09248.1"/>
    <property type="status" value="ALT_SEQ"/>
    <property type="molecule type" value="Genomic_DNA"/>
</dbReference>
<dbReference type="EMBL" id="CP002688">
    <property type="protein sequence ID" value="AED96682.1"/>
    <property type="molecule type" value="Genomic_DNA"/>
</dbReference>
<dbReference type="EMBL" id="AY065078">
    <property type="protein sequence ID" value="AAL38254.1"/>
    <property type="status" value="ALT_FRAME"/>
    <property type="molecule type" value="mRNA"/>
</dbReference>
<dbReference type="EMBL" id="AY114544">
    <property type="protein sequence ID" value="AAM47863.1"/>
    <property type="molecule type" value="mRNA"/>
</dbReference>
<dbReference type="RefSeq" id="NP_200392.3">
    <molecule id="F4K687-1"/>
    <property type="nucleotide sequence ID" value="NM_124963.5"/>
</dbReference>
<dbReference type="SMR" id="F4K687"/>
<dbReference type="BioGRID" id="20919">
    <property type="interactions" value="1"/>
</dbReference>
<dbReference type="FunCoup" id="F4K687">
    <property type="interactions" value="2669"/>
</dbReference>
<dbReference type="STRING" id="3702.F4K687"/>
<dbReference type="ProteomicsDB" id="251116">
    <molecule id="F4K687-1"/>
</dbReference>
<dbReference type="EnsemblPlants" id="AT5G55810.1">
    <molecule id="F4K687-1"/>
    <property type="protein sequence ID" value="AT5G55810.1"/>
    <property type="gene ID" value="AT5G55810"/>
</dbReference>
<dbReference type="GeneID" id="835675"/>
<dbReference type="Gramene" id="AT5G55810.1">
    <molecule id="F4K687-1"/>
    <property type="protein sequence ID" value="AT5G55810.1"/>
    <property type="gene ID" value="AT5G55810"/>
</dbReference>
<dbReference type="KEGG" id="ath:AT5G55810"/>
<dbReference type="Araport" id="AT5G55810"/>
<dbReference type="TAIR" id="AT5G55810">
    <property type="gene designation" value="NMNAT"/>
</dbReference>
<dbReference type="HOGENOM" id="CLU_033366_3_2_1"/>
<dbReference type="InParanoid" id="F4K687"/>
<dbReference type="OMA" id="QPWKENI"/>
<dbReference type="BRENDA" id="2.7.7.1">
    <property type="organism ID" value="399"/>
</dbReference>
<dbReference type="UniPathway" id="UPA00253">
    <property type="reaction ID" value="UER00332"/>
</dbReference>
<dbReference type="UniPathway" id="UPA00253">
    <property type="reaction ID" value="UER00600"/>
</dbReference>
<dbReference type="PRO" id="PR:F4K687"/>
<dbReference type="Proteomes" id="UP000006548">
    <property type="component" value="Chromosome 5"/>
</dbReference>
<dbReference type="ExpressionAtlas" id="F4K687">
    <property type="expression patterns" value="baseline and differential"/>
</dbReference>
<dbReference type="GO" id="GO:0005634">
    <property type="term" value="C:nucleus"/>
    <property type="evidence" value="ECO:0007669"/>
    <property type="project" value="UniProtKB-SubCell"/>
</dbReference>
<dbReference type="GO" id="GO:0005524">
    <property type="term" value="F:ATP binding"/>
    <property type="evidence" value="ECO:0007669"/>
    <property type="project" value="UniProtKB-KW"/>
</dbReference>
<dbReference type="GO" id="GO:0046872">
    <property type="term" value="F:metal ion binding"/>
    <property type="evidence" value="ECO:0007669"/>
    <property type="project" value="UniProtKB-KW"/>
</dbReference>
<dbReference type="GO" id="GO:0000309">
    <property type="term" value="F:nicotinamide-nucleotide adenylyltransferase activity"/>
    <property type="evidence" value="ECO:0007669"/>
    <property type="project" value="UniProtKB-EC"/>
</dbReference>
<dbReference type="GO" id="GO:0004515">
    <property type="term" value="F:nicotinate-nucleotide adenylyltransferase activity"/>
    <property type="evidence" value="ECO:0007669"/>
    <property type="project" value="UniProtKB-EC"/>
</dbReference>
<dbReference type="GO" id="GO:0009435">
    <property type="term" value="P:NAD biosynthetic process"/>
    <property type="evidence" value="ECO:0007669"/>
    <property type="project" value="UniProtKB-UniPathway"/>
</dbReference>
<dbReference type="CDD" id="cd09286">
    <property type="entry name" value="NMNAT_Eukarya"/>
    <property type="match status" value="1"/>
</dbReference>
<dbReference type="FunFam" id="3.40.50.620:FF:000200">
    <property type="entry name" value="Nicotinamide-nucleotide adenylyltransferase"/>
    <property type="match status" value="1"/>
</dbReference>
<dbReference type="Gene3D" id="3.40.50.620">
    <property type="entry name" value="HUPs"/>
    <property type="match status" value="1"/>
</dbReference>
<dbReference type="InterPro" id="IPR004821">
    <property type="entry name" value="Cyt_trans-like"/>
</dbReference>
<dbReference type="InterPro" id="IPR051182">
    <property type="entry name" value="Euk_NMN_adenylyltrnsfrase"/>
</dbReference>
<dbReference type="InterPro" id="IPR005248">
    <property type="entry name" value="NadD/NMNAT"/>
</dbReference>
<dbReference type="InterPro" id="IPR045094">
    <property type="entry name" value="NMNAT_euk"/>
</dbReference>
<dbReference type="InterPro" id="IPR014729">
    <property type="entry name" value="Rossmann-like_a/b/a_fold"/>
</dbReference>
<dbReference type="NCBIfam" id="TIGR00482">
    <property type="entry name" value="nicotinate (nicotinamide) nucleotide adenylyltransferase"/>
    <property type="match status" value="1"/>
</dbReference>
<dbReference type="PANTHER" id="PTHR12039">
    <property type="entry name" value="NICOTINAMIDE MONONUCLEOTIDE ADENYLYLTRANSFERASE"/>
    <property type="match status" value="1"/>
</dbReference>
<dbReference type="PANTHER" id="PTHR12039:SF0">
    <property type="entry name" value="NICOTINAMIDE-NUCLEOTIDE ADENYLYLTRANSFERASE"/>
    <property type="match status" value="1"/>
</dbReference>
<dbReference type="Pfam" id="PF01467">
    <property type="entry name" value="CTP_transf_like"/>
    <property type="match status" value="1"/>
</dbReference>
<dbReference type="SUPFAM" id="SSF52374">
    <property type="entry name" value="Nucleotidylyl transferase"/>
    <property type="match status" value="1"/>
</dbReference>
<accession>F4K687</accession>
<accession>Q8VZB8</accession>
<accession>Q9FM58</accession>
<comment type="function">
    <text evidence="2">Catalyzes the formation of NAD(+) from nicotinamide mononucleotide (NMN) and ATP. Can also use the deamidated form; nicotinic acid mononucleotide (NaMN) as substrate.</text>
</comment>
<comment type="catalytic activity">
    <reaction evidence="2">
        <text>beta-nicotinamide D-ribonucleotide + ATP + H(+) = diphosphate + NAD(+)</text>
        <dbReference type="Rhea" id="RHEA:21360"/>
        <dbReference type="ChEBI" id="CHEBI:14649"/>
        <dbReference type="ChEBI" id="CHEBI:15378"/>
        <dbReference type="ChEBI" id="CHEBI:30616"/>
        <dbReference type="ChEBI" id="CHEBI:33019"/>
        <dbReference type="ChEBI" id="CHEBI:57540"/>
        <dbReference type="EC" id="2.7.7.1"/>
    </reaction>
</comment>
<comment type="catalytic activity">
    <reaction evidence="2">
        <text>nicotinate beta-D-ribonucleotide + ATP + H(+) = deamido-NAD(+) + diphosphate</text>
        <dbReference type="Rhea" id="RHEA:22860"/>
        <dbReference type="ChEBI" id="CHEBI:15378"/>
        <dbReference type="ChEBI" id="CHEBI:30616"/>
        <dbReference type="ChEBI" id="CHEBI:33019"/>
        <dbReference type="ChEBI" id="CHEBI:57502"/>
        <dbReference type="ChEBI" id="CHEBI:58437"/>
        <dbReference type="EC" id="2.7.7.18"/>
    </reaction>
</comment>
<comment type="cofactor">
    <cofactor evidence="2">
        <name>a divalent metal cation</name>
        <dbReference type="ChEBI" id="CHEBI:60240"/>
    </cofactor>
</comment>
<comment type="pathway">
    <text evidence="2">Cofactor biosynthesis; NAD(+) biosynthesis; deamido-NAD(+) from nicotinate D-ribonucleotide: step 1/1.</text>
</comment>
<comment type="pathway">
    <text evidence="2">Cofactor biosynthesis; NAD(+) biosynthesis; NAD(+) from nicotinamide D-ribonucleotide: step 1/1.</text>
</comment>
<comment type="subcellular location">
    <subcellularLocation>
        <location>Nucleus</location>
    </subcellularLocation>
</comment>
<comment type="alternative products">
    <event type="alternative splicing"/>
    <isoform>
        <id>F4K687-1</id>
        <name>1</name>
        <sequence type="displayed"/>
    </isoform>
    <text>A number of isoforms are produced. According to EST sequences.</text>
</comment>
<comment type="similarity">
    <text evidence="3">Belongs to the eukaryotic NMN adenylyltransferase family.</text>
</comment>
<comment type="sequence caution" evidence="3">
    <conflict type="frameshift">
        <sequence resource="EMBL-CDS" id="AAL38254"/>
    </conflict>
</comment>
<comment type="sequence caution" evidence="3">
    <conflict type="erroneous gene model prediction">
        <sequence resource="EMBL-CDS" id="BAB09248"/>
    </conflict>
</comment>
<organism>
    <name type="scientific">Arabidopsis thaliana</name>
    <name type="common">Mouse-ear cress</name>
    <dbReference type="NCBI Taxonomy" id="3702"/>
    <lineage>
        <taxon>Eukaryota</taxon>
        <taxon>Viridiplantae</taxon>
        <taxon>Streptophyta</taxon>
        <taxon>Embryophyta</taxon>
        <taxon>Tracheophyta</taxon>
        <taxon>Spermatophyta</taxon>
        <taxon>Magnoliopsida</taxon>
        <taxon>eudicotyledons</taxon>
        <taxon>Gunneridae</taxon>
        <taxon>Pentapetalae</taxon>
        <taxon>rosids</taxon>
        <taxon>malvids</taxon>
        <taxon>Brassicales</taxon>
        <taxon>Brassicaceae</taxon>
        <taxon>Camelineae</taxon>
        <taxon>Arabidopsis</taxon>
    </lineage>
</organism>
<proteinExistence type="evidence at transcript level"/>
<protein>
    <recommendedName>
        <fullName evidence="3">Nicotinamide/nicotinic acid mononucleotide adenylyltransferase</fullName>
        <shortName>NMN/NaMN adenylyltransferase</shortName>
        <ecNumber>2.7.7.1</ecNumber>
        <ecNumber>2.7.7.18</ecNumber>
    </recommendedName>
    <alternativeName>
        <fullName>Nicotinamide mononucleotide adenylyltransferase</fullName>
        <shortName>NMN adenylyltransferase</shortName>
    </alternativeName>
    <alternativeName>
        <fullName>Nicotinate-nucleotide adenylyltransferase</fullName>
        <shortName>NaMN adenylyltransferase</shortName>
    </alternativeName>
</protein>